<organism>
    <name type="scientific">Shigella flexneri</name>
    <dbReference type="NCBI Taxonomy" id="623"/>
    <lineage>
        <taxon>Bacteria</taxon>
        <taxon>Pseudomonadati</taxon>
        <taxon>Pseudomonadota</taxon>
        <taxon>Gammaproteobacteria</taxon>
        <taxon>Enterobacterales</taxon>
        <taxon>Enterobacteriaceae</taxon>
        <taxon>Shigella</taxon>
    </lineage>
</organism>
<protein>
    <recommendedName>
        <fullName evidence="2">Large ribosomal subunit protein bL35</fullName>
    </recommendedName>
    <alternativeName>
        <fullName evidence="4">50S ribosomal protein L35</fullName>
    </alternativeName>
</protein>
<proteinExistence type="inferred from homology"/>
<dbReference type="EMBL" id="AE005674">
    <property type="protein sequence ID" value="AAN43104.2"/>
    <property type="molecule type" value="Genomic_DNA"/>
</dbReference>
<dbReference type="EMBL" id="AE014073">
    <property type="protein sequence ID" value="AAP16994.1"/>
    <property type="molecule type" value="Genomic_DNA"/>
</dbReference>
<dbReference type="RefSeq" id="NP_707397.2">
    <property type="nucleotide sequence ID" value="NC_004337.2"/>
</dbReference>
<dbReference type="RefSeq" id="WP_001124225.1">
    <property type="nucleotide sequence ID" value="NZ_WPGW01000051.1"/>
</dbReference>
<dbReference type="SMR" id="P0A7Q5"/>
<dbReference type="STRING" id="198214.SF1514"/>
<dbReference type="PaxDb" id="198214-SF1514"/>
<dbReference type="GeneID" id="1024707"/>
<dbReference type="GeneID" id="97601348"/>
<dbReference type="KEGG" id="sfl:SF1514"/>
<dbReference type="KEGG" id="sfx:S1632"/>
<dbReference type="PATRIC" id="fig|198214.7.peg.1790"/>
<dbReference type="HOGENOM" id="CLU_169643_1_1_6"/>
<dbReference type="Proteomes" id="UP000001006">
    <property type="component" value="Chromosome"/>
</dbReference>
<dbReference type="Proteomes" id="UP000002673">
    <property type="component" value="Chromosome"/>
</dbReference>
<dbReference type="GO" id="GO:0022625">
    <property type="term" value="C:cytosolic large ribosomal subunit"/>
    <property type="evidence" value="ECO:0007669"/>
    <property type="project" value="TreeGrafter"/>
</dbReference>
<dbReference type="GO" id="GO:0003735">
    <property type="term" value="F:structural constituent of ribosome"/>
    <property type="evidence" value="ECO:0007669"/>
    <property type="project" value="InterPro"/>
</dbReference>
<dbReference type="GO" id="GO:0006412">
    <property type="term" value="P:translation"/>
    <property type="evidence" value="ECO:0007669"/>
    <property type="project" value="UniProtKB-UniRule"/>
</dbReference>
<dbReference type="FunFam" id="4.10.410.60:FF:000001">
    <property type="entry name" value="50S ribosomal protein L35"/>
    <property type="match status" value="1"/>
</dbReference>
<dbReference type="Gene3D" id="4.10.410.60">
    <property type="match status" value="1"/>
</dbReference>
<dbReference type="HAMAP" id="MF_00514">
    <property type="entry name" value="Ribosomal_bL35"/>
    <property type="match status" value="1"/>
</dbReference>
<dbReference type="InterPro" id="IPR001706">
    <property type="entry name" value="Ribosomal_bL35"/>
</dbReference>
<dbReference type="InterPro" id="IPR021137">
    <property type="entry name" value="Ribosomal_bL35-like"/>
</dbReference>
<dbReference type="InterPro" id="IPR018265">
    <property type="entry name" value="Ribosomal_bL35_CS"/>
</dbReference>
<dbReference type="InterPro" id="IPR037229">
    <property type="entry name" value="Ribosomal_bL35_sf"/>
</dbReference>
<dbReference type="NCBIfam" id="TIGR00001">
    <property type="entry name" value="rpmI_bact"/>
    <property type="match status" value="1"/>
</dbReference>
<dbReference type="PANTHER" id="PTHR33343">
    <property type="entry name" value="54S RIBOSOMAL PROTEIN BL35M"/>
    <property type="match status" value="1"/>
</dbReference>
<dbReference type="PANTHER" id="PTHR33343:SF1">
    <property type="entry name" value="LARGE RIBOSOMAL SUBUNIT PROTEIN BL35M"/>
    <property type="match status" value="1"/>
</dbReference>
<dbReference type="Pfam" id="PF01632">
    <property type="entry name" value="Ribosomal_L35p"/>
    <property type="match status" value="1"/>
</dbReference>
<dbReference type="PRINTS" id="PR00064">
    <property type="entry name" value="RIBOSOMALL35"/>
</dbReference>
<dbReference type="SUPFAM" id="SSF143034">
    <property type="entry name" value="L35p-like"/>
    <property type="match status" value="1"/>
</dbReference>
<dbReference type="PROSITE" id="PS00936">
    <property type="entry name" value="RIBOSOMAL_L35"/>
    <property type="match status" value="1"/>
</dbReference>
<feature type="initiator methionine" description="Removed" evidence="1">
    <location>
        <position position="1"/>
    </location>
</feature>
<feature type="chain" id="PRO_0000177416" description="Large ribosomal subunit protein bL35">
    <location>
        <begin position="2"/>
        <end position="65"/>
    </location>
</feature>
<feature type="region of interest" description="Disordered" evidence="3">
    <location>
        <begin position="1"/>
        <end position="22"/>
    </location>
</feature>
<feature type="compositionally biased region" description="Basic residues" evidence="3">
    <location>
        <begin position="10"/>
        <end position="22"/>
    </location>
</feature>
<comment type="similarity">
    <text evidence="2">Belongs to the bacterial ribosomal protein bL35 family.</text>
</comment>
<sequence>MPKIKTVRGAAKRFKKTGKGGFKHKHANLRHILTKKATKRKRHLRPKAMVSKGDLGLVIACLPYA</sequence>
<keyword id="KW-1185">Reference proteome</keyword>
<keyword id="KW-0687">Ribonucleoprotein</keyword>
<keyword id="KW-0689">Ribosomal protein</keyword>
<reference key="1">
    <citation type="journal article" date="2002" name="Nucleic Acids Res.">
        <title>Genome sequence of Shigella flexneri 2a: insights into pathogenicity through comparison with genomes of Escherichia coli K12 and O157.</title>
        <authorList>
            <person name="Jin Q."/>
            <person name="Yuan Z."/>
            <person name="Xu J."/>
            <person name="Wang Y."/>
            <person name="Shen Y."/>
            <person name="Lu W."/>
            <person name="Wang J."/>
            <person name="Liu H."/>
            <person name="Yang J."/>
            <person name="Yang F."/>
            <person name="Zhang X."/>
            <person name="Zhang J."/>
            <person name="Yang G."/>
            <person name="Wu H."/>
            <person name="Qu D."/>
            <person name="Dong J."/>
            <person name="Sun L."/>
            <person name="Xue Y."/>
            <person name="Zhao A."/>
            <person name="Gao Y."/>
            <person name="Zhu J."/>
            <person name="Kan B."/>
            <person name="Ding K."/>
            <person name="Chen S."/>
            <person name="Cheng H."/>
            <person name="Yao Z."/>
            <person name="He B."/>
            <person name="Chen R."/>
            <person name="Ma D."/>
            <person name="Qiang B."/>
            <person name="Wen Y."/>
            <person name="Hou Y."/>
            <person name="Yu J."/>
        </authorList>
    </citation>
    <scope>NUCLEOTIDE SEQUENCE [LARGE SCALE GENOMIC DNA]</scope>
    <source>
        <strain>301 / Serotype 2a</strain>
    </source>
</reference>
<reference key="2">
    <citation type="journal article" date="2003" name="Infect. Immun.">
        <title>Complete genome sequence and comparative genomics of Shigella flexneri serotype 2a strain 2457T.</title>
        <authorList>
            <person name="Wei J."/>
            <person name="Goldberg M.B."/>
            <person name="Burland V."/>
            <person name="Venkatesan M.M."/>
            <person name="Deng W."/>
            <person name="Fournier G."/>
            <person name="Mayhew G.F."/>
            <person name="Plunkett G. III"/>
            <person name="Rose D.J."/>
            <person name="Darling A."/>
            <person name="Mau B."/>
            <person name="Perna N.T."/>
            <person name="Payne S.M."/>
            <person name="Runyen-Janecky L.J."/>
            <person name="Zhou S."/>
            <person name="Schwartz D.C."/>
            <person name="Blattner F.R."/>
        </authorList>
    </citation>
    <scope>NUCLEOTIDE SEQUENCE [LARGE SCALE GENOMIC DNA]</scope>
    <source>
        <strain>ATCC 700930 / 2457T / Serotype 2a</strain>
    </source>
</reference>
<accession>P0A7Q5</accession>
<accession>P07085</accession>
<accession>P78275</accession>
<evidence type="ECO:0000250" key="1"/>
<evidence type="ECO:0000255" key="2">
    <source>
        <dbReference type="HAMAP-Rule" id="MF_00514"/>
    </source>
</evidence>
<evidence type="ECO:0000256" key="3">
    <source>
        <dbReference type="SAM" id="MobiDB-lite"/>
    </source>
</evidence>
<evidence type="ECO:0000305" key="4"/>
<gene>
    <name evidence="2" type="primary">rpmI</name>
    <name type="ordered locus">SF1514</name>
    <name type="ordered locus">S1632</name>
</gene>
<name>RL35_SHIFL</name>